<feature type="chain" id="PRO_1000100563" description="Adenylate kinase">
    <location>
        <begin position="1"/>
        <end position="215"/>
    </location>
</feature>
<feature type="region of interest" description="NMP" evidence="1">
    <location>
        <begin position="30"/>
        <end position="59"/>
    </location>
</feature>
<feature type="region of interest" description="LID" evidence="1">
    <location>
        <begin position="126"/>
        <end position="163"/>
    </location>
</feature>
<feature type="binding site" evidence="1">
    <location>
        <begin position="10"/>
        <end position="15"/>
    </location>
    <ligand>
        <name>ATP</name>
        <dbReference type="ChEBI" id="CHEBI:30616"/>
    </ligand>
</feature>
<feature type="binding site" evidence="1">
    <location>
        <position position="31"/>
    </location>
    <ligand>
        <name>AMP</name>
        <dbReference type="ChEBI" id="CHEBI:456215"/>
    </ligand>
</feature>
<feature type="binding site" evidence="1">
    <location>
        <position position="36"/>
    </location>
    <ligand>
        <name>AMP</name>
        <dbReference type="ChEBI" id="CHEBI:456215"/>
    </ligand>
</feature>
<feature type="binding site" evidence="1">
    <location>
        <begin position="57"/>
        <end position="59"/>
    </location>
    <ligand>
        <name>AMP</name>
        <dbReference type="ChEBI" id="CHEBI:456215"/>
    </ligand>
</feature>
<feature type="binding site" evidence="1">
    <location>
        <begin position="85"/>
        <end position="88"/>
    </location>
    <ligand>
        <name>AMP</name>
        <dbReference type="ChEBI" id="CHEBI:456215"/>
    </ligand>
</feature>
<feature type="binding site" evidence="1">
    <location>
        <position position="92"/>
    </location>
    <ligand>
        <name>AMP</name>
        <dbReference type="ChEBI" id="CHEBI:456215"/>
    </ligand>
</feature>
<feature type="binding site" evidence="1">
    <location>
        <position position="127"/>
    </location>
    <ligand>
        <name>ATP</name>
        <dbReference type="ChEBI" id="CHEBI:30616"/>
    </ligand>
</feature>
<feature type="binding site" evidence="1">
    <location>
        <position position="130"/>
    </location>
    <ligand>
        <name>Zn(2+)</name>
        <dbReference type="ChEBI" id="CHEBI:29105"/>
        <note>structural</note>
    </ligand>
</feature>
<feature type="binding site" evidence="1">
    <location>
        <position position="133"/>
    </location>
    <ligand>
        <name>Zn(2+)</name>
        <dbReference type="ChEBI" id="CHEBI:29105"/>
        <note>structural</note>
    </ligand>
</feature>
<feature type="binding site" evidence="1">
    <location>
        <begin position="136"/>
        <end position="137"/>
    </location>
    <ligand>
        <name>ATP</name>
        <dbReference type="ChEBI" id="CHEBI:30616"/>
    </ligand>
</feature>
<feature type="binding site" evidence="1">
    <location>
        <position position="150"/>
    </location>
    <ligand>
        <name>Zn(2+)</name>
        <dbReference type="ChEBI" id="CHEBI:29105"/>
        <note>structural</note>
    </ligand>
</feature>
<feature type="binding site" evidence="1">
    <location>
        <position position="153"/>
    </location>
    <ligand>
        <name>Zn(2+)</name>
        <dbReference type="ChEBI" id="CHEBI:29105"/>
        <note>structural</note>
    </ligand>
</feature>
<feature type="binding site" evidence="1">
    <location>
        <position position="160"/>
    </location>
    <ligand>
        <name>AMP</name>
        <dbReference type="ChEBI" id="CHEBI:456215"/>
    </ligand>
</feature>
<feature type="binding site" evidence="1">
    <location>
        <position position="171"/>
    </location>
    <ligand>
        <name>AMP</name>
        <dbReference type="ChEBI" id="CHEBI:456215"/>
    </ligand>
</feature>
<feature type="binding site" evidence="1">
    <location>
        <position position="199"/>
    </location>
    <ligand>
        <name>ATP</name>
        <dbReference type="ChEBI" id="CHEBI:30616"/>
    </ligand>
</feature>
<keyword id="KW-0067">ATP-binding</keyword>
<keyword id="KW-0963">Cytoplasm</keyword>
<keyword id="KW-0418">Kinase</keyword>
<keyword id="KW-0479">Metal-binding</keyword>
<keyword id="KW-0545">Nucleotide biosynthesis</keyword>
<keyword id="KW-0547">Nucleotide-binding</keyword>
<keyword id="KW-1185">Reference proteome</keyword>
<keyword id="KW-0808">Transferase</keyword>
<keyword id="KW-0862">Zinc</keyword>
<organism>
    <name type="scientific">Exiguobacterium sibiricum (strain DSM 17290 / CCUG 55495 / CIP 109462 / JCM 13490 / 255-15)</name>
    <dbReference type="NCBI Taxonomy" id="262543"/>
    <lineage>
        <taxon>Bacteria</taxon>
        <taxon>Bacillati</taxon>
        <taxon>Bacillota</taxon>
        <taxon>Bacilli</taxon>
        <taxon>Bacillales</taxon>
        <taxon>Bacillales Family XII. Incertae Sedis</taxon>
        <taxon>Exiguobacterium</taxon>
    </lineage>
</organism>
<evidence type="ECO:0000255" key="1">
    <source>
        <dbReference type="HAMAP-Rule" id="MF_00235"/>
    </source>
</evidence>
<protein>
    <recommendedName>
        <fullName evidence="1">Adenylate kinase</fullName>
        <shortName evidence="1">AK</shortName>
        <ecNumber evidence="1">2.7.4.3</ecNumber>
    </recommendedName>
    <alternativeName>
        <fullName evidence="1">ATP-AMP transphosphorylase</fullName>
    </alternativeName>
    <alternativeName>
        <fullName evidence="1">ATP:AMP phosphotransferase</fullName>
    </alternativeName>
    <alternativeName>
        <fullName evidence="1">Adenylate monophosphate kinase</fullName>
    </alternativeName>
</protein>
<reference key="1">
    <citation type="submission" date="2008-04" db="EMBL/GenBank/DDBJ databases">
        <title>Complete sequence of chromosome of Exiguobacterium sibiricum 255-15.</title>
        <authorList>
            <consortium name="US DOE Joint Genome Institute"/>
            <person name="Copeland A."/>
            <person name="Lucas S."/>
            <person name="Lapidus A."/>
            <person name="Glavina del Rio T."/>
            <person name="Dalin E."/>
            <person name="Tice H."/>
            <person name="Bruce D."/>
            <person name="Goodwin L."/>
            <person name="Pitluck S."/>
            <person name="Kiss H."/>
            <person name="Chertkov O."/>
            <person name="Monk C."/>
            <person name="Brettin T."/>
            <person name="Detter J.C."/>
            <person name="Han C."/>
            <person name="Kuske C.R."/>
            <person name="Schmutz J."/>
            <person name="Larimer F."/>
            <person name="Land M."/>
            <person name="Hauser L."/>
            <person name="Kyrpides N."/>
            <person name="Mikhailova N."/>
            <person name="Vishnivetskaya T."/>
            <person name="Rodrigues D.F."/>
            <person name="Gilichinsky D."/>
            <person name="Tiedje J."/>
            <person name="Richardson P."/>
        </authorList>
    </citation>
    <scope>NUCLEOTIDE SEQUENCE [LARGE SCALE GENOMIC DNA]</scope>
    <source>
        <strain>DSM 17290 / CCUG 55495 / CIP 109462 / JCM 13490 / 255-15</strain>
    </source>
</reference>
<dbReference type="EC" id="2.7.4.3" evidence="1"/>
<dbReference type="EMBL" id="CP001022">
    <property type="protein sequence ID" value="ACB59604.1"/>
    <property type="molecule type" value="Genomic_DNA"/>
</dbReference>
<dbReference type="RefSeq" id="WP_012369030.1">
    <property type="nucleotide sequence ID" value="NC_010556.1"/>
</dbReference>
<dbReference type="SMR" id="B1YGX1"/>
<dbReference type="STRING" id="262543.Exig_0117"/>
<dbReference type="KEGG" id="esi:Exig_0117"/>
<dbReference type="eggNOG" id="COG0563">
    <property type="taxonomic scope" value="Bacteria"/>
</dbReference>
<dbReference type="HOGENOM" id="CLU_032354_1_2_9"/>
<dbReference type="OrthoDB" id="9805030at2"/>
<dbReference type="UniPathway" id="UPA00588">
    <property type="reaction ID" value="UER00649"/>
</dbReference>
<dbReference type="Proteomes" id="UP000001681">
    <property type="component" value="Chromosome"/>
</dbReference>
<dbReference type="GO" id="GO:0005737">
    <property type="term" value="C:cytoplasm"/>
    <property type="evidence" value="ECO:0007669"/>
    <property type="project" value="UniProtKB-SubCell"/>
</dbReference>
<dbReference type="GO" id="GO:0004017">
    <property type="term" value="F:adenylate kinase activity"/>
    <property type="evidence" value="ECO:0007669"/>
    <property type="project" value="UniProtKB-UniRule"/>
</dbReference>
<dbReference type="GO" id="GO:0005524">
    <property type="term" value="F:ATP binding"/>
    <property type="evidence" value="ECO:0007669"/>
    <property type="project" value="UniProtKB-UniRule"/>
</dbReference>
<dbReference type="GO" id="GO:0008270">
    <property type="term" value="F:zinc ion binding"/>
    <property type="evidence" value="ECO:0007669"/>
    <property type="project" value="UniProtKB-UniRule"/>
</dbReference>
<dbReference type="GO" id="GO:0044209">
    <property type="term" value="P:AMP salvage"/>
    <property type="evidence" value="ECO:0007669"/>
    <property type="project" value="UniProtKB-UniRule"/>
</dbReference>
<dbReference type="CDD" id="cd01428">
    <property type="entry name" value="ADK"/>
    <property type="match status" value="1"/>
</dbReference>
<dbReference type="FunFam" id="3.40.50.300:FF:000106">
    <property type="entry name" value="Adenylate kinase mitochondrial"/>
    <property type="match status" value="1"/>
</dbReference>
<dbReference type="Gene3D" id="3.40.50.300">
    <property type="entry name" value="P-loop containing nucleotide triphosphate hydrolases"/>
    <property type="match status" value="1"/>
</dbReference>
<dbReference type="HAMAP" id="MF_00235">
    <property type="entry name" value="Adenylate_kinase_Adk"/>
    <property type="match status" value="1"/>
</dbReference>
<dbReference type="InterPro" id="IPR006259">
    <property type="entry name" value="Adenyl_kin_sub"/>
</dbReference>
<dbReference type="InterPro" id="IPR000850">
    <property type="entry name" value="Adenylat/UMP-CMP_kin"/>
</dbReference>
<dbReference type="InterPro" id="IPR033690">
    <property type="entry name" value="Adenylat_kinase_CS"/>
</dbReference>
<dbReference type="InterPro" id="IPR007862">
    <property type="entry name" value="Adenylate_kinase_lid-dom"/>
</dbReference>
<dbReference type="InterPro" id="IPR027417">
    <property type="entry name" value="P-loop_NTPase"/>
</dbReference>
<dbReference type="NCBIfam" id="TIGR01351">
    <property type="entry name" value="adk"/>
    <property type="match status" value="1"/>
</dbReference>
<dbReference type="NCBIfam" id="NF001380">
    <property type="entry name" value="PRK00279.1-2"/>
    <property type="match status" value="1"/>
</dbReference>
<dbReference type="NCBIfam" id="NF001381">
    <property type="entry name" value="PRK00279.1-3"/>
    <property type="match status" value="1"/>
</dbReference>
<dbReference type="NCBIfam" id="NF011100">
    <property type="entry name" value="PRK14527.1"/>
    <property type="match status" value="1"/>
</dbReference>
<dbReference type="PANTHER" id="PTHR23359">
    <property type="entry name" value="NUCLEOTIDE KINASE"/>
    <property type="match status" value="1"/>
</dbReference>
<dbReference type="Pfam" id="PF00406">
    <property type="entry name" value="ADK"/>
    <property type="match status" value="1"/>
</dbReference>
<dbReference type="Pfam" id="PF05191">
    <property type="entry name" value="ADK_lid"/>
    <property type="match status" value="1"/>
</dbReference>
<dbReference type="PRINTS" id="PR00094">
    <property type="entry name" value="ADENYLTKNASE"/>
</dbReference>
<dbReference type="SUPFAM" id="SSF52540">
    <property type="entry name" value="P-loop containing nucleoside triphosphate hydrolases"/>
    <property type="match status" value="1"/>
</dbReference>
<dbReference type="PROSITE" id="PS00113">
    <property type="entry name" value="ADENYLATE_KINASE"/>
    <property type="match status" value="1"/>
</dbReference>
<comment type="function">
    <text evidence="1">Catalyzes the reversible transfer of the terminal phosphate group between ATP and AMP. Plays an important role in cellular energy homeostasis and in adenine nucleotide metabolism.</text>
</comment>
<comment type="catalytic activity">
    <reaction evidence="1">
        <text>AMP + ATP = 2 ADP</text>
        <dbReference type="Rhea" id="RHEA:12973"/>
        <dbReference type="ChEBI" id="CHEBI:30616"/>
        <dbReference type="ChEBI" id="CHEBI:456215"/>
        <dbReference type="ChEBI" id="CHEBI:456216"/>
        <dbReference type="EC" id="2.7.4.3"/>
    </reaction>
</comment>
<comment type="pathway">
    <text evidence="1">Purine metabolism; AMP biosynthesis via salvage pathway; AMP from ADP: step 1/1.</text>
</comment>
<comment type="subunit">
    <text evidence="1">Monomer.</text>
</comment>
<comment type="subcellular location">
    <subcellularLocation>
        <location evidence="1">Cytoplasm</location>
    </subcellularLocation>
</comment>
<comment type="domain">
    <text evidence="1">Consists of three domains, a large central CORE domain and two small peripheral domains, NMPbind and LID, which undergo movements during catalysis. The LID domain closes over the site of phosphoryl transfer upon ATP binding. Assembling and dissambling the active center during each catalytic cycle provides an effective means to prevent ATP hydrolysis. Some bacteria have evolved a zinc-coordinating structure that stabilizes the LID domain.</text>
</comment>
<comment type="similarity">
    <text evidence="1">Belongs to the adenylate kinase family.</text>
</comment>
<name>KAD_EXIS2</name>
<sequence>MNLVLMGLPGAGKGTQAAKIIEDYAIPHISTGDMFRAAIKDQTPLGQEAKSYMDKGELVPDEVTIGIVRERLAKEDCANGFLLDGFPRTVKQADALEVLLADLNKQIDHVVHIGVNPEKLVPRLTGRRICPTCGATYHVIYNPPKVEGVCDIDGSALVQREDDQEETVRRRLEVNVAQAQPLIDFYAEKGYLRNLDGDRPINEVYSDVQALLGGQ</sequence>
<accession>B1YGX1</accession>
<gene>
    <name evidence="1" type="primary">adk</name>
    <name type="ordered locus">Exig_0117</name>
</gene>
<proteinExistence type="inferred from homology"/>